<sequence>MTQQITLIKDKILSDNYFTLHNITYDLTRKDGEVIRHKREVYDRGNGATILLYNTKKKTVVLIRQFRVATWVNGNESGQLIESCAGLLDNDEPEVCIRKEAIEETGYEVGEVRKLFELYMSPGGVTELIHFFIAEYSDNQRANAGGGVEDEDIEVLELPFSQALEMIKTGEIRDGKTVLLLNYLQTSHLMD</sequence>
<keyword id="KW-0378">Hydrolase</keyword>
<keyword id="KW-0460">Magnesium</keyword>
<keyword id="KW-0479">Metal-binding</keyword>
<reference key="1">
    <citation type="submission" date="2008-02" db="EMBL/GenBank/DDBJ databases">
        <title>Complete sequence of Escherichia coli C str. ATCC 8739.</title>
        <authorList>
            <person name="Copeland A."/>
            <person name="Lucas S."/>
            <person name="Lapidus A."/>
            <person name="Glavina del Rio T."/>
            <person name="Dalin E."/>
            <person name="Tice H."/>
            <person name="Bruce D."/>
            <person name="Goodwin L."/>
            <person name="Pitluck S."/>
            <person name="Kiss H."/>
            <person name="Brettin T."/>
            <person name="Detter J.C."/>
            <person name="Han C."/>
            <person name="Kuske C.R."/>
            <person name="Schmutz J."/>
            <person name="Larimer F."/>
            <person name="Land M."/>
            <person name="Hauser L."/>
            <person name="Kyrpides N."/>
            <person name="Mikhailova N."/>
            <person name="Ingram L."/>
            <person name="Richardson P."/>
        </authorList>
    </citation>
    <scope>NUCLEOTIDE SEQUENCE [LARGE SCALE GENOMIC DNA]</scope>
    <source>
        <strain>ATCC 8739 / DSM 1576 / NBRC 3972 / NCIMB 8545 / WDCM 00012 / Crooks</strain>
    </source>
</reference>
<name>NUDK_ECOLC</name>
<dbReference type="EC" id="3.6.1.-" evidence="1"/>
<dbReference type="EMBL" id="CP000946">
    <property type="protein sequence ID" value="ACA76876.1"/>
    <property type="molecule type" value="Genomic_DNA"/>
</dbReference>
<dbReference type="RefSeq" id="WP_001300814.1">
    <property type="nucleotide sequence ID" value="NZ_MTFT01000002.1"/>
</dbReference>
<dbReference type="SMR" id="B1IWJ3"/>
<dbReference type="KEGG" id="ecl:EcolC_1210"/>
<dbReference type="HOGENOM" id="CLU_062658_6_0_6"/>
<dbReference type="GO" id="GO:0005829">
    <property type="term" value="C:cytosol"/>
    <property type="evidence" value="ECO:0007669"/>
    <property type="project" value="TreeGrafter"/>
</dbReference>
<dbReference type="GO" id="GO:0016818">
    <property type="term" value="F:hydrolase activity, acting on acid anhydrides, in phosphorus-containing anhydrides"/>
    <property type="evidence" value="ECO:0007669"/>
    <property type="project" value="InterPro"/>
</dbReference>
<dbReference type="GO" id="GO:0046872">
    <property type="term" value="F:metal ion binding"/>
    <property type="evidence" value="ECO:0007669"/>
    <property type="project" value="UniProtKB-KW"/>
</dbReference>
<dbReference type="GO" id="GO:0006753">
    <property type="term" value="P:nucleoside phosphate metabolic process"/>
    <property type="evidence" value="ECO:0007669"/>
    <property type="project" value="TreeGrafter"/>
</dbReference>
<dbReference type="GO" id="GO:0019693">
    <property type="term" value="P:ribose phosphate metabolic process"/>
    <property type="evidence" value="ECO:0007669"/>
    <property type="project" value="TreeGrafter"/>
</dbReference>
<dbReference type="CDD" id="cd24157">
    <property type="entry name" value="NUDIX_GDPMK"/>
    <property type="match status" value="1"/>
</dbReference>
<dbReference type="FunFam" id="3.90.79.10:FF:000010">
    <property type="entry name" value="GDP-mannose pyrophosphatase NudK"/>
    <property type="match status" value="1"/>
</dbReference>
<dbReference type="Gene3D" id="3.90.79.10">
    <property type="entry name" value="Nucleoside Triphosphate Pyrophosphohydrolase"/>
    <property type="match status" value="1"/>
</dbReference>
<dbReference type="InterPro" id="IPR004385">
    <property type="entry name" value="NDP_pyrophosphatase"/>
</dbReference>
<dbReference type="InterPro" id="IPR015797">
    <property type="entry name" value="NUDIX_hydrolase-like_dom_sf"/>
</dbReference>
<dbReference type="InterPro" id="IPR000086">
    <property type="entry name" value="NUDIX_hydrolase_dom"/>
</dbReference>
<dbReference type="NCBIfam" id="TIGR00052">
    <property type="entry name" value="nudix-type nucleoside diphosphatase, YffH/AdpP family"/>
    <property type="match status" value="1"/>
</dbReference>
<dbReference type="NCBIfam" id="NF011585">
    <property type="entry name" value="PRK15009.1"/>
    <property type="match status" value="1"/>
</dbReference>
<dbReference type="PANTHER" id="PTHR11839:SF18">
    <property type="entry name" value="NUDIX HYDROLASE DOMAIN-CONTAINING PROTEIN"/>
    <property type="match status" value="1"/>
</dbReference>
<dbReference type="PANTHER" id="PTHR11839">
    <property type="entry name" value="UDP/ADP-SUGAR PYROPHOSPHATASE"/>
    <property type="match status" value="1"/>
</dbReference>
<dbReference type="Pfam" id="PF00293">
    <property type="entry name" value="NUDIX"/>
    <property type="match status" value="1"/>
</dbReference>
<dbReference type="SUPFAM" id="SSF55811">
    <property type="entry name" value="Nudix"/>
    <property type="match status" value="1"/>
</dbReference>
<dbReference type="PROSITE" id="PS51462">
    <property type="entry name" value="NUDIX"/>
    <property type="match status" value="1"/>
</dbReference>
<protein>
    <recommendedName>
        <fullName>GDP-mannose pyrophosphatase</fullName>
        <ecNumber evidence="1">3.6.1.-</ecNumber>
    </recommendedName>
    <alternativeName>
        <fullName>GDP-mannose hydrolase</fullName>
    </alternativeName>
    <alternativeName>
        <fullName>GDPMK</fullName>
    </alternativeName>
</protein>
<accession>B1IWJ3</accession>
<comment type="function">
    <text evidence="1">Nucleoside diphosphate sugar hydrolase that hydrolyzes GDP-mannose as its preferred substrate, yielding GMP and mannose-1-phosphate.</text>
</comment>
<comment type="catalytic activity">
    <reaction evidence="1">
        <text>GDP-alpha-D-mannose + H2O = alpha-D-mannose 1-phosphate + GMP + 2 H(+)</text>
        <dbReference type="Rhea" id="RHEA:27978"/>
        <dbReference type="ChEBI" id="CHEBI:15377"/>
        <dbReference type="ChEBI" id="CHEBI:15378"/>
        <dbReference type="ChEBI" id="CHEBI:57527"/>
        <dbReference type="ChEBI" id="CHEBI:58115"/>
        <dbReference type="ChEBI" id="CHEBI:58409"/>
    </reaction>
</comment>
<comment type="cofactor">
    <cofactor evidence="1">
        <name>Mg(2+)</name>
        <dbReference type="ChEBI" id="CHEBI:18420"/>
    </cofactor>
</comment>
<comment type="subunit">
    <text evidence="1">Homodimer.</text>
</comment>
<comment type="domain">
    <text evidence="1">In the dimer, the N-terminal domains are swapped between the two monomers, such that residues of both chains contribute to the active site.</text>
</comment>
<comment type="similarity">
    <text evidence="3">Belongs to the Nudix hydrolase family. NudK subfamily.</text>
</comment>
<organism>
    <name type="scientific">Escherichia coli (strain ATCC 8739 / DSM 1576 / NBRC 3972 / NCIMB 8545 / WDCM 00012 / Crooks)</name>
    <dbReference type="NCBI Taxonomy" id="481805"/>
    <lineage>
        <taxon>Bacteria</taxon>
        <taxon>Pseudomonadati</taxon>
        <taxon>Pseudomonadota</taxon>
        <taxon>Gammaproteobacteria</taxon>
        <taxon>Enterobacterales</taxon>
        <taxon>Enterobacteriaceae</taxon>
        <taxon>Escherichia</taxon>
    </lineage>
</organism>
<evidence type="ECO:0000250" key="1">
    <source>
        <dbReference type="UniProtKB" id="P37128"/>
    </source>
</evidence>
<evidence type="ECO:0000255" key="2">
    <source>
        <dbReference type="PROSITE-ProRule" id="PRU00794"/>
    </source>
</evidence>
<evidence type="ECO:0000305" key="3"/>
<feature type="chain" id="PRO_0000342482" description="GDP-mannose pyrophosphatase">
    <location>
        <begin position="1"/>
        <end position="191"/>
    </location>
</feature>
<feature type="domain" description="Nudix hydrolase" evidence="2">
    <location>
        <begin position="43"/>
        <end position="180"/>
    </location>
</feature>
<feature type="short sequence motif" description="Nudix box">
    <location>
        <begin position="86"/>
        <end position="106"/>
    </location>
</feature>
<feature type="binding site" description="in other chain" evidence="1">
    <location>
        <position position="17"/>
    </location>
    <ligand>
        <name>GDP-alpha-D-mannose</name>
        <dbReference type="ChEBI" id="CHEBI:57527"/>
        <note>ligand shared between dimeric partners</note>
    </ligand>
</feature>
<feature type="binding site" evidence="1">
    <location>
        <begin position="38"/>
        <end position="40"/>
    </location>
    <ligand>
        <name>GDP-alpha-D-mannose</name>
        <dbReference type="ChEBI" id="CHEBI:57527"/>
        <note>ligand shared between dimeric partners</note>
    </ligand>
</feature>
<feature type="binding site" description="in other chain" evidence="1">
    <location>
        <position position="67"/>
    </location>
    <ligand>
        <name>GDP-alpha-D-mannose</name>
        <dbReference type="ChEBI" id="CHEBI:57527"/>
        <note>ligand shared between dimeric partners</note>
    </ligand>
</feature>
<feature type="binding site" description="in other chain" evidence="1">
    <location>
        <begin position="85"/>
        <end position="87"/>
    </location>
    <ligand>
        <name>GDP-alpha-D-mannose</name>
        <dbReference type="ChEBI" id="CHEBI:57527"/>
        <note>ligand shared between dimeric partners</note>
    </ligand>
</feature>
<feature type="binding site" evidence="1">
    <location>
        <position position="85"/>
    </location>
    <ligand>
        <name>Mg(2+)</name>
        <dbReference type="ChEBI" id="CHEBI:18420"/>
        <label>1</label>
    </ligand>
</feature>
<feature type="binding site" evidence="1">
    <location>
        <position position="100"/>
    </location>
    <ligand>
        <name>Mg(2+)</name>
        <dbReference type="ChEBI" id="CHEBI:18420"/>
        <label>2</label>
    </ligand>
</feature>
<feature type="binding site" description="in other chain" evidence="1">
    <location>
        <position position="104"/>
    </location>
    <ligand>
        <name>GDP-alpha-D-mannose</name>
        <dbReference type="ChEBI" id="CHEBI:57527"/>
        <note>ligand shared between dimeric partners</note>
    </ligand>
</feature>
<feature type="binding site" evidence="1">
    <location>
        <position position="104"/>
    </location>
    <ligand>
        <name>Mg(2+)</name>
        <dbReference type="ChEBI" id="CHEBI:18420"/>
        <label>1</label>
    </ligand>
</feature>
<feature type="binding site" evidence="1">
    <location>
        <position position="104"/>
    </location>
    <ligand>
        <name>Mg(2+)</name>
        <dbReference type="ChEBI" id="CHEBI:18420"/>
        <label>2</label>
    </ligand>
</feature>
<feature type="binding site" description="in other chain" evidence="1">
    <location>
        <position position="127"/>
    </location>
    <ligand>
        <name>GDP-alpha-D-mannose</name>
        <dbReference type="ChEBI" id="CHEBI:57527"/>
        <note>ligand shared between dimeric partners</note>
    </ligand>
</feature>
<feature type="binding site" description="in other chain" evidence="1">
    <location>
        <begin position="150"/>
        <end position="151"/>
    </location>
    <ligand>
        <name>GDP-alpha-D-mannose</name>
        <dbReference type="ChEBI" id="CHEBI:57527"/>
        <note>ligand shared between dimeric partners</note>
    </ligand>
</feature>
<feature type="binding site" evidence="1">
    <location>
        <position position="151"/>
    </location>
    <ligand>
        <name>Mg(2+)</name>
        <dbReference type="ChEBI" id="CHEBI:18420"/>
        <label>2</label>
    </ligand>
</feature>
<feature type="binding site" description="in other chain" evidence="1">
    <location>
        <position position="176"/>
    </location>
    <ligand>
        <name>GDP-alpha-D-mannose</name>
        <dbReference type="ChEBI" id="CHEBI:57527"/>
        <note>ligand shared between dimeric partners</note>
    </ligand>
</feature>
<gene>
    <name type="primary">nudK</name>
    <name type="ordered locus">EcolC_1210</name>
</gene>
<proteinExistence type="inferred from homology"/>